<accession>A2SL57</accession>
<sequence>MSLLSFLLGEKKKTASVAKERLQIILAHERSGRGGSRPDYLEALQRELVAVISKYVSIKPEDIKVHLQKQDNLEVLEVKLELPEAARG</sequence>
<keyword id="KW-0131">Cell cycle</keyword>
<keyword id="KW-0132">Cell division</keyword>
<keyword id="KW-1185">Reference proteome</keyword>
<organism>
    <name type="scientific">Methylibium petroleiphilum (strain ATCC BAA-1232 / LMG 22953 / PM1)</name>
    <dbReference type="NCBI Taxonomy" id="420662"/>
    <lineage>
        <taxon>Bacteria</taxon>
        <taxon>Pseudomonadati</taxon>
        <taxon>Pseudomonadota</taxon>
        <taxon>Betaproteobacteria</taxon>
        <taxon>Burkholderiales</taxon>
        <taxon>Sphaerotilaceae</taxon>
        <taxon>Methylibium</taxon>
    </lineage>
</organism>
<protein>
    <recommendedName>
        <fullName evidence="1">Cell division topological specificity factor</fullName>
    </recommendedName>
</protein>
<name>MINE_METPP</name>
<feature type="chain" id="PRO_0000298134" description="Cell division topological specificity factor">
    <location>
        <begin position="1"/>
        <end position="88"/>
    </location>
</feature>
<dbReference type="EMBL" id="CP000555">
    <property type="protein sequence ID" value="ABM96296.1"/>
    <property type="molecule type" value="Genomic_DNA"/>
</dbReference>
<dbReference type="RefSeq" id="WP_011830917.1">
    <property type="nucleotide sequence ID" value="NC_008825.1"/>
</dbReference>
<dbReference type="SMR" id="A2SL57"/>
<dbReference type="STRING" id="420662.Mpe_A3343"/>
<dbReference type="KEGG" id="mpt:Mpe_A3343"/>
<dbReference type="eggNOG" id="COG0851">
    <property type="taxonomic scope" value="Bacteria"/>
</dbReference>
<dbReference type="HOGENOM" id="CLU_137929_2_1_4"/>
<dbReference type="Proteomes" id="UP000000366">
    <property type="component" value="Chromosome"/>
</dbReference>
<dbReference type="GO" id="GO:0051301">
    <property type="term" value="P:cell division"/>
    <property type="evidence" value="ECO:0007669"/>
    <property type="project" value="UniProtKB-KW"/>
</dbReference>
<dbReference type="GO" id="GO:0032955">
    <property type="term" value="P:regulation of division septum assembly"/>
    <property type="evidence" value="ECO:0007669"/>
    <property type="project" value="InterPro"/>
</dbReference>
<dbReference type="FunFam" id="3.30.1070.10:FF:000001">
    <property type="entry name" value="Cell division topological specificity factor"/>
    <property type="match status" value="1"/>
</dbReference>
<dbReference type="Gene3D" id="3.30.1070.10">
    <property type="entry name" value="Cell division topological specificity factor MinE"/>
    <property type="match status" value="1"/>
</dbReference>
<dbReference type="HAMAP" id="MF_00262">
    <property type="entry name" value="MinE"/>
    <property type="match status" value="1"/>
</dbReference>
<dbReference type="InterPro" id="IPR005527">
    <property type="entry name" value="MinE"/>
</dbReference>
<dbReference type="InterPro" id="IPR036707">
    <property type="entry name" value="MinE_sf"/>
</dbReference>
<dbReference type="NCBIfam" id="TIGR01215">
    <property type="entry name" value="minE"/>
    <property type="match status" value="1"/>
</dbReference>
<dbReference type="NCBIfam" id="NF001422">
    <property type="entry name" value="PRK00296.1"/>
    <property type="match status" value="1"/>
</dbReference>
<dbReference type="NCBIfam" id="NF010595">
    <property type="entry name" value="PRK13989.1"/>
    <property type="match status" value="1"/>
</dbReference>
<dbReference type="Pfam" id="PF03776">
    <property type="entry name" value="MinE"/>
    <property type="match status" value="1"/>
</dbReference>
<dbReference type="SUPFAM" id="SSF55229">
    <property type="entry name" value="Cell division protein MinE topological specificity domain"/>
    <property type="match status" value="1"/>
</dbReference>
<comment type="function">
    <text evidence="1">Prevents the cell division inhibition by proteins MinC and MinD at internal division sites while permitting inhibition at polar sites. This ensures cell division at the proper site by restricting the formation of a division septum at the midpoint of the long axis of the cell.</text>
</comment>
<comment type="similarity">
    <text evidence="1">Belongs to the MinE family.</text>
</comment>
<gene>
    <name evidence="1" type="primary">minE</name>
    <name type="ordered locus">Mpe_A3343</name>
</gene>
<reference key="1">
    <citation type="journal article" date="2007" name="J. Bacteriol.">
        <title>Whole-genome analysis of the methyl tert-butyl ether-degrading beta-proteobacterium Methylibium petroleiphilum PM1.</title>
        <authorList>
            <person name="Kane S.R."/>
            <person name="Chakicherla A.Y."/>
            <person name="Chain P.S.G."/>
            <person name="Schmidt R."/>
            <person name="Shin M.W."/>
            <person name="Legler T.C."/>
            <person name="Scow K.M."/>
            <person name="Larimer F.W."/>
            <person name="Lucas S.M."/>
            <person name="Richardson P.M."/>
            <person name="Hristova K.R."/>
        </authorList>
    </citation>
    <scope>NUCLEOTIDE SEQUENCE [LARGE SCALE GENOMIC DNA]</scope>
    <source>
        <strain>ATCC BAA-1232 / LMG 22953 / PM1</strain>
    </source>
</reference>
<proteinExistence type="inferred from homology"/>
<evidence type="ECO:0000255" key="1">
    <source>
        <dbReference type="HAMAP-Rule" id="MF_00262"/>
    </source>
</evidence>